<organism>
    <name type="scientific">Danio rerio</name>
    <name type="common">Zebrafish</name>
    <name type="synonym">Brachydanio rerio</name>
    <dbReference type="NCBI Taxonomy" id="7955"/>
    <lineage>
        <taxon>Eukaryota</taxon>
        <taxon>Metazoa</taxon>
        <taxon>Chordata</taxon>
        <taxon>Craniata</taxon>
        <taxon>Vertebrata</taxon>
        <taxon>Euteleostomi</taxon>
        <taxon>Actinopterygii</taxon>
        <taxon>Neopterygii</taxon>
        <taxon>Teleostei</taxon>
        <taxon>Ostariophysi</taxon>
        <taxon>Cypriniformes</taxon>
        <taxon>Danionidae</taxon>
        <taxon>Danioninae</taxon>
        <taxon>Danio</taxon>
    </lineage>
</organism>
<accession>Q5RGE5</accession>
<accession>Q1RLS6</accession>
<feature type="chain" id="PRO_0000209127" description="Protein artemis">
    <location>
        <begin position="1"/>
        <end position="639"/>
    </location>
</feature>
<feature type="region of interest" description="Disordered" evidence="2">
    <location>
        <begin position="450"/>
        <end position="496"/>
    </location>
</feature>
<feature type="region of interest" description="Disordered" evidence="2">
    <location>
        <begin position="515"/>
        <end position="570"/>
    </location>
</feature>
<feature type="region of interest" description="Disordered" evidence="2">
    <location>
        <begin position="590"/>
        <end position="617"/>
    </location>
</feature>
<feature type="compositionally biased region" description="Acidic residues" evidence="2">
    <location>
        <begin position="454"/>
        <end position="466"/>
    </location>
</feature>
<feature type="compositionally biased region" description="Polar residues" evidence="2">
    <location>
        <begin position="518"/>
        <end position="537"/>
    </location>
</feature>
<feature type="compositionally biased region" description="Low complexity" evidence="2">
    <location>
        <begin position="548"/>
        <end position="560"/>
    </location>
</feature>
<feature type="sequence conflict" description="In Ref. 2; AAI15305." evidence="3" ref="2">
    <original>S</original>
    <variation>N</variation>
    <location>
        <position position="92"/>
    </location>
</feature>
<feature type="sequence conflict" description="In Ref. 2; AAI15305." evidence="3" ref="2">
    <original>N</original>
    <variation>S</variation>
    <location>
        <position position="224"/>
    </location>
</feature>
<feature type="sequence conflict" description="In Ref. 2; AAI15305." evidence="3" ref="2">
    <original>A</original>
    <variation>V</variation>
    <location>
        <position position="592"/>
    </location>
</feature>
<feature type="sequence conflict" description="In Ref. 2; AAI15305." evidence="3" ref="2">
    <original>A</original>
    <variation>V</variation>
    <location>
        <position position="635"/>
    </location>
</feature>
<comment type="function">
    <text evidence="1">May have a role in the processing of DNA double strand breaks (DSBs) prior to their repair by the non homologous end joining (NHEJ) pathway. Probably exhibits both exonuclease and endonuclease activity (By similarity).</text>
</comment>
<comment type="subcellular location">
    <subcellularLocation>
        <location evidence="1">Nucleus</location>
    </subcellularLocation>
</comment>
<comment type="similarity">
    <text evidence="3">Belongs to the DNA repair metallo-beta-lactamase (DRMBL) family.</text>
</comment>
<dbReference type="EC" id="3.1.-.-"/>
<dbReference type="EMBL" id="BX901962">
    <property type="protein sequence ID" value="CAI20677.1"/>
    <property type="molecule type" value="Genomic_DNA"/>
</dbReference>
<dbReference type="EMBL" id="BC115304">
    <property type="protein sequence ID" value="AAI15305.1"/>
    <property type="molecule type" value="mRNA"/>
</dbReference>
<dbReference type="RefSeq" id="NP_001038566.1">
    <property type="nucleotide sequence ID" value="NM_001045101.1"/>
</dbReference>
<dbReference type="RefSeq" id="XP_017210553.1">
    <property type="nucleotide sequence ID" value="XM_017355064.1"/>
</dbReference>
<dbReference type="SMR" id="Q5RGE5"/>
<dbReference type="FunCoup" id="Q5RGE5">
    <property type="interactions" value="562"/>
</dbReference>
<dbReference type="STRING" id="7955.ENSDARP00000067187"/>
<dbReference type="PaxDb" id="7955-ENSDARP00000067187"/>
<dbReference type="Ensembl" id="ENSDART00000067188">
    <property type="protein sequence ID" value="ENSDARP00000067187"/>
    <property type="gene ID" value="ENSDARG00000045704"/>
</dbReference>
<dbReference type="Ensembl" id="ENSDART00000182748">
    <property type="protein sequence ID" value="ENSDARP00000151325"/>
    <property type="gene ID" value="ENSDARG00000110444"/>
</dbReference>
<dbReference type="GeneID" id="566285"/>
<dbReference type="KEGG" id="dre:566285"/>
<dbReference type="AGR" id="ZFIN:ZDB-GENE-041210-72"/>
<dbReference type="CTD" id="64421"/>
<dbReference type="ZFIN" id="ZDB-GENE-041210-72">
    <property type="gene designation" value="dclre1c"/>
</dbReference>
<dbReference type="eggNOG" id="KOG1361">
    <property type="taxonomic scope" value="Eukaryota"/>
</dbReference>
<dbReference type="HOGENOM" id="CLU_029238_0_0_1"/>
<dbReference type="InParanoid" id="Q5RGE5"/>
<dbReference type="OMA" id="QIHVDKL"/>
<dbReference type="OrthoDB" id="262529at2759"/>
<dbReference type="PhylomeDB" id="Q5RGE5"/>
<dbReference type="TreeFam" id="TF329572"/>
<dbReference type="PRO" id="PR:Q5RGE5"/>
<dbReference type="Proteomes" id="UP000000437">
    <property type="component" value="Alternate scaffold 4"/>
</dbReference>
<dbReference type="Proteomes" id="UP000000437">
    <property type="component" value="Chromosome 4"/>
</dbReference>
<dbReference type="Bgee" id="ENSDARG00000045704">
    <property type="expression patterns" value="Expressed in testis and 19 other cell types or tissues"/>
</dbReference>
<dbReference type="ExpressionAtlas" id="Q5RGE5">
    <property type="expression patterns" value="baseline"/>
</dbReference>
<dbReference type="GO" id="GO:0070419">
    <property type="term" value="C:nonhomologous end joining complex"/>
    <property type="evidence" value="ECO:0000250"/>
    <property type="project" value="UniProtKB"/>
</dbReference>
<dbReference type="GO" id="GO:0005634">
    <property type="term" value="C:nucleus"/>
    <property type="evidence" value="ECO:0007669"/>
    <property type="project" value="UniProtKB-SubCell"/>
</dbReference>
<dbReference type="GO" id="GO:0035312">
    <property type="term" value="F:5'-3' DNA exonuclease activity"/>
    <property type="evidence" value="ECO:0000318"/>
    <property type="project" value="GO_Central"/>
</dbReference>
<dbReference type="GO" id="GO:0003684">
    <property type="term" value="F:damaged DNA binding"/>
    <property type="evidence" value="ECO:0000318"/>
    <property type="project" value="GO_Central"/>
</dbReference>
<dbReference type="GO" id="GO:0004519">
    <property type="term" value="F:endonuclease activity"/>
    <property type="evidence" value="ECO:0007669"/>
    <property type="project" value="UniProtKB-KW"/>
</dbReference>
<dbReference type="GO" id="GO:0006310">
    <property type="term" value="P:DNA recombination"/>
    <property type="evidence" value="ECO:0007669"/>
    <property type="project" value="UniProtKB-KW"/>
</dbReference>
<dbReference type="GO" id="GO:0006303">
    <property type="term" value="P:double-strand break repair via nonhomologous end joining"/>
    <property type="evidence" value="ECO:0000318"/>
    <property type="project" value="GO_Central"/>
</dbReference>
<dbReference type="GO" id="GO:0036297">
    <property type="term" value="P:interstrand cross-link repair"/>
    <property type="evidence" value="ECO:0000318"/>
    <property type="project" value="GO_Central"/>
</dbReference>
<dbReference type="GO" id="GO:0000723">
    <property type="term" value="P:telomere maintenance"/>
    <property type="evidence" value="ECO:0000318"/>
    <property type="project" value="GO_Central"/>
</dbReference>
<dbReference type="CDD" id="cd16297">
    <property type="entry name" value="artemis-SNM1C-like_MBL-fold"/>
    <property type="match status" value="1"/>
</dbReference>
<dbReference type="FunFam" id="3.40.50.12650:FF:000002">
    <property type="entry name" value="DNA cross-link repair 1C"/>
    <property type="match status" value="1"/>
</dbReference>
<dbReference type="FunFam" id="3.60.15.10:FF:000018">
    <property type="entry name" value="DNA cross-link repair 1C"/>
    <property type="match status" value="1"/>
</dbReference>
<dbReference type="Gene3D" id="3.40.50.12650">
    <property type="match status" value="1"/>
</dbReference>
<dbReference type="Gene3D" id="3.60.15.10">
    <property type="entry name" value="Ribonuclease Z/Hydroxyacylglutathione hydrolase-like"/>
    <property type="match status" value="1"/>
</dbReference>
<dbReference type="InterPro" id="IPR011084">
    <property type="entry name" value="DRMBL"/>
</dbReference>
<dbReference type="InterPro" id="IPR036866">
    <property type="entry name" value="RibonucZ/Hydroxyglut_hydro"/>
</dbReference>
<dbReference type="PANTHER" id="PTHR23240">
    <property type="entry name" value="DNA CROSS-LINK REPAIR PROTEIN PSO2/SNM1-RELATED"/>
    <property type="match status" value="1"/>
</dbReference>
<dbReference type="PANTHER" id="PTHR23240:SF8">
    <property type="entry name" value="PROTEIN ARTEMIS"/>
    <property type="match status" value="1"/>
</dbReference>
<dbReference type="Pfam" id="PF07522">
    <property type="entry name" value="DRMBL"/>
    <property type="match status" value="1"/>
</dbReference>
<dbReference type="SUPFAM" id="SSF56281">
    <property type="entry name" value="Metallo-hydrolase/oxidoreductase"/>
    <property type="match status" value="1"/>
</dbReference>
<gene>
    <name type="primary">dclre1c</name>
    <name type="ORF">si:dkey-153k10.3</name>
    <name type="ORF">zgc:136877</name>
</gene>
<name>DCR1C_DANRE</name>
<reference key="1">
    <citation type="journal article" date="2013" name="Nature">
        <title>The zebrafish reference genome sequence and its relationship to the human genome.</title>
        <authorList>
            <person name="Howe K."/>
            <person name="Clark M.D."/>
            <person name="Torroja C.F."/>
            <person name="Torrance J."/>
            <person name="Berthelot C."/>
            <person name="Muffato M."/>
            <person name="Collins J.E."/>
            <person name="Humphray S."/>
            <person name="McLaren K."/>
            <person name="Matthews L."/>
            <person name="McLaren S."/>
            <person name="Sealy I."/>
            <person name="Caccamo M."/>
            <person name="Churcher C."/>
            <person name="Scott C."/>
            <person name="Barrett J.C."/>
            <person name="Koch R."/>
            <person name="Rauch G.J."/>
            <person name="White S."/>
            <person name="Chow W."/>
            <person name="Kilian B."/>
            <person name="Quintais L.T."/>
            <person name="Guerra-Assuncao J.A."/>
            <person name="Zhou Y."/>
            <person name="Gu Y."/>
            <person name="Yen J."/>
            <person name="Vogel J.H."/>
            <person name="Eyre T."/>
            <person name="Redmond S."/>
            <person name="Banerjee R."/>
            <person name="Chi J."/>
            <person name="Fu B."/>
            <person name="Langley E."/>
            <person name="Maguire S.F."/>
            <person name="Laird G.K."/>
            <person name="Lloyd D."/>
            <person name="Kenyon E."/>
            <person name="Donaldson S."/>
            <person name="Sehra H."/>
            <person name="Almeida-King J."/>
            <person name="Loveland J."/>
            <person name="Trevanion S."/>
            <person name="Jones M."/>
            <person name="Quail M."/>
            <person name="Willey D."/>
            <person name="Hunt A."/>
            <person name="Burton J."/>
            <person name="Sims S."/>
            <person name="McLay K."/>
            <person name="Plumb B."/>
            <person name="Davis J."/>
            <person name="Clee C."/>
            <person name="Oliver K."/>
            <person name="Clark R."/>
            <person name="Riddle C."/>
            <person name="Elliot D."/>
            <person name="Threadgold G."/>
            <person name="Harden G."/>
            <person name="Ware D."/>
            <person name="Begum S."/>
            <person name="Mortimore B."/>
            <person name="Kerry G."/>
            <person name="Heath P."/>
            <person name="Phillimore B."/>
            <person name="Tracey A."/>
            <person name="Corby N."/>
            <person name="Dunn M."/>
            <person name="Johnson C."/>
            <person name="Wood J."/>
            <person name="Clark S."/>
            <person name="Pelan S."/>
            <person name="Griffiths G."/>
            <person name="Smith M."/>
            <person name="Glithero R."/>
            <person name="Howden P."/>
            <person name="Barker N."/>
            <person name="Lloyd C."/>
            <person name="Stevens C."/>
            <person name="Harley J."/>
            <person name="Holt K."/>
            <person name="Panagiotidis G."/>
            <person name="Lovell J."/>
            <person name="Beasley H."/>
            <person name="Henderson C."/>
            <person name="Gordon D."/>
            <person name="Auger K."/>
            <person name="Wright D."/>
            <person name="Collins J."/>
            <person name="Raisen C."/>
            <person name="Dyer L."/>
            <person name="Leung K."/>
            <person name="Robertson L."/>
            <person name="Ambridge K."/>
            <person name="Leongamornlert D."/>
            <person name="McGuire S."/>
            <person name="Gilderthorp R."/>
            <person name="Griffiths C."/>
            <person name="Manthravadi D."/>
            <person name="Nichol S."/>
            <person name="Barker G."/>
            <person name="Whitehead S."/>
            <person name="Kay M."/>
            <person name="Brown J."/>
            <person name="Murnane C."/>
            <person name="Gray E."/>
            <person name="Humphries M."/>
            <person name="Sycamore N."/>
            <person name="Barker D."/>
            <person name="Saunders D."/>
            <person name="Wallis J."/>
            <person name="Babbage A."/>
            <person name="Hammond S."/>
            <person name="Mashreghi-Mohammadi M."/>
            <person name="Barr L."/>
            <person name="Martin S."/>
            <person name="Wray P."/>
            <person name="Ellington A."/>
            <person name="Matthews N."/>
            <person name="Ellwood M."/>
            <person name="Woodmansey R."/>
            <person name="Clark G."/>
            <person name="Cooper J."/>
            <person name="Tromans A."/>
            <person name="Grafham D."/>
            <person name="Skuce C."/>
            <person name="Pandian R."/>
            <person name="Andrews R."/>
            <person name="Harrison E."/>
            <person name="Kimberley A."/>
            <person name="Garnett J."/>
            <person name="Fosker N."/>
            <person name="Hall R."/>
            <person name="Garner P."/>
            <person name="Kelly D."/>
            <person name="Bird C."/>
            <person name="Palmer S."/>
            <person name="Gehring I."/>
            <person name="Berger A."/>
            <person name="Dooley C.M."/>
            <person name="Ersan-Urun Z."/>
            <person name="Eser C."/>
            <person name="Geiger H."/>
            <person name="Geisler M."/>
            <person name="Karotki L."/>
            <person name="Kirn A."/>
            <person name="Konantz J."/>
            <person name="Konantz M."/>
            <person name="Oberlander M."/>
            <person name="Rudolph-Geiger S."/>
            <person name="Teucke M."/>
            <person name="Lanz C."/>
            <person name="Raddatz G."/>
            <person name="Osoegawa K."/>
            <person name="Zhu B."/>
            <person name="Rapp A."/>
            <person name="Widaa S."/>
            <person name="Langford C."/>
            <person name="Yang F."/>
            <person name="Schuster S.C."/>
            <person name="Carter N.P."/>
            <person name="Harrow J."/>
            <person name="Ning Z."/>
            <person name="Herrero J."/>
            <person name="Searle S.M."/>
            <person name="Enright A."/>
            <person name="Geisler R."/>
            <person name="Plasterk R.H."/>
            <person name="Lee C."/>
            <person name="Westerfield M."/>
            <person name="de Jong P.J."/>
            <person name="Zon L.I."/>
            <person name="Postlethwait J.H."/>
            <person name="Nusslein-Volhard C."/>
            <person name="Hubbard T.J."/>
            <person name="Roest Crollius H."/>
            <person name="Rogers J."/>
            <person name="Stemple D.L."/>
        </authorList>
    </citation>
    <scope>NUCLEOTIDE SEQUENCE [LARGE SCALE GENOMIC DNA]</scope>
    <source>
        <strain>Tuebingen</strain>
    </source>
</reference>
<reference key="2">
    <citation type="submission" date="2006-04" db="EMBL/GenBank/DDBJ databases">
        <authorList>
            <consortium name="NIH - Zebrafish Gene Collection (ZGC) project"/>
        </authorList>
    </citation>
    <scope>NUCLEOTIDE SEQUENCE [LARGE SCALE MRNA]</scope>
</reference>
<keyword id="KW-0227">DNA damage</keyword>
<keyword id="KW-0233">DNA recombination</keyword>
<keyword id="KW-0234">DNA repair</keyword>
<keyword id="KW-0255">Endonuclease</keyword>
<keyword id="KW-0269">Exonuclease</keyword>
<keyword id="KW-0378">Hydrolase</keyword>
<keyword id="KW-0540">Nuclease</keyword>
<keyword id="KW-0539">Nucleus</keyword>
<keyword id="KW-1185">Reference proteome</keyword>
<sequence length="639" mass="71711">MSSFAGRMKEYPSISLDRFDRENLHARAYFLSHCHKDHMKGLKGPLLKRKLKFSLTVKLYCSYVTKELLLSNPRYAFWEDHIVPLELDSPTSISLIDESTGETEDVVVTLLSAGHCPGSVMFLFEGAKGTVLYTGDFRLAVGDAARMEYLHSGDRVKDIQSVYIDTTFFDPKYYQIPSREACLAGIQQLVQDWICQSPYHVVWLNCKAAYGYEYLFTNLGQEFNSQIHVNSLDMFKKMPEILCHVTTNRATQIHACRHPKDEEFFRANRLPCGSTAPDGIPLNIISIKPSTIWFGERTRKTSVVVKMGSSSYRACFSFHSSYLEVKDFLSYICPVNIYPNVIPLGKTVEDLTELLKPLCRKHCGREEIVYKPLGALKRTRKRSTSEGSDSDGDLFEEVSTAPRRRKITVSDLTTVAIRVRPHSANADSHDNDQTYSLIKLCPSAHTSNYMDCTESNDDDDDEDDAAEQTPAAAPPPSSTEKPCSKHTHSDSSLTSSTQPCWEKFFKAEVVLTDESELENSQNTQTLSTENTASQSPELFQDEDEDSSVHMSSSQSTHISDAGTESLSQVDTIMVQEDHSKACNLQHKTEEAAELKSDSQVSSDFELPPTPGSKVPQPEDLKELYRKLAAGEDVVARQIF</sequence>
<evidence type="ECO:0000250" key="1"/>
<evidence type="ECO:0000256" key="2">
    <source>
        <dbReference type="SAM" id="MobiDB-lite"/>
    </source>
</evidence>
<evidence type="ECO:0000305" key="3"/>
<protein>
    <recommendedName>
        <fullName>Protein artemis</fullName>
        <ecNumber>3.1.-.-</ecNumber>
    </recommendedName>
    <alternativeName>
        <fullName>DNA cross-link repair 1C protein</fullName>
    </alternativeName>
</protein>
<proteinExistence type="evidence at transcript level"/>